<dbReference type="EC" id="1.17.7.3" evidence="1"/>
<dbReference type="EMBL" id="CP000155">
    <property type="protein sequence ID" value="ABC31160.1"/>
    <property type="molecule type" value="Genomic_DNA"/>
</dbReference>
<dbReference type="RefSeq" id="WP_011398227.1">
    <property type="nucleotide sequence ID" value="NC_007645.1"/>
</dbReference>
<dbReference type="SMR" id="Q2SDW4"/>
<dbReference type="STRING" id="349521.HCH_04456"/>
<dbReference type="KEGG" id="hch:HCH_04456"/>
<dbReference type="eggNOG" id="COG0821">
    <property type="taxonomic scope" value="Bacteria"/>
</dbReference>
<dbReference type="HOGENOM" id="CLU_042258_0_0_6"/>
<dbReference type="OrthoDB" id="9803214at2"/>
<dbReference type="UniPathway" id="UPA00056">
    <property type="reaction ID" value="UER00096"/>
</dbReference>
<dbReference type="Proteomes" id="UP000000238">
    <property type="component" value="Chromosome"/>
</dbReference>
<dbReference type="GO" id="GO:0051539">
    <property type="term" value="F:4 iron, 4 sulfur cluster binding"/>
    <property type="evidence" value="ECO:0007669"/>
    <property type="project" value="UniProtKB-UniRule"/>
</dbReference>
<dbReference type="GO" id="GO:0046429">
    <property type="term" value="F:4-hydroxy-3-methylbut-2-en-1-yl diphosphate synthase activity (ferredoxin)"/>
    <property type="evidence" value="ECO:0007669"/>
    <property type="project" value="UniProtKB-UniRule"/>
</dbReference>
<dbReference type="GO" id="GO:0141197">
    <property type="term" value="F:4-hydroxy-3-methylbut-2-enyl-diphosphate synthase activity (flavodoxin)"/>
    <property type="evidence" value="ECO:0007669"/>
    <property type="project" value="UniProtKB-EC"/>
</dbReference>
<dbReference type="GO" id="GO:0005506">
    <property type="term" value="F:iron ion binding"/>
    <property type="evidence" value="ECO:0007669"/>
    <property type="project" value="InterPro"/>
</dbReference>
<dbReference type="GO" id="GO:0019288">
    <property type="term" value="P:isopentenyl diphosphate biosynthetic process, methylerythritol 4-phosphate pathway"/>
    <property type="evidence" value="ECO:0007669"/>
    <property type="project" value="UniProtKB-UniRule"/>
</dbReference>
<dbReference type="GO" id="GO:0016114">
    <property type="term" value="P:terpenoid biosynthetic process"/>
    <property type="evidence" value="ECO:0007669"/>
    <property type="project" value="InterPro"/>
</dbReference>
<dbReference type="FunFam" id="3.20.20.20:FF:000001">
    <property type="entry name" value="4-hydroxy-3-methylbut-2-en-1-yl diphosphate synthase (flavodoxin)"/>
    <property type="match status" value="1"/>
</dbReference>
<dbReference type="Gene3D" id="3.20.20.20">
    <property type="entry name" value="Dihydropteroate synthase-like"/>
    <property type="match status" value="1"/>
</dbReference>
<dbReference type="Gene3D" id="3.30.413.10">
    <property type="entry name" value="Sulfite Reductase Hemoprotein, domain 1"/>
    <property type="match status" value="1"/>
</dbReference>
<dbReference type="HAMAP" id="MF_00159">
    <property type="entry name" value="IspG"/>
    <property type="match status" value="1"/>
</dbReference>
<dbReference type="InterPro" id="IPR011005">
    <property type="entry name" value="Dihydropteroate_synth-like_sf"/>
</dbReference>
<dbReference type="InterPro" id="IPR016425">
    <property type="entry name" value="IspG_bac"/>
</dbReference>
<dbReference type="InterPro" id="IPR004588">
    <property type="entry name" value="IspG_bac-typ"/>
</dbReference>
<dbReference type="InterPro" id="IPR045854">
    <property type="entry name" value="NO2/SO3_Rdtase_4Fe4S_sf"/>
</dbReference>
<dbReference type="NCBIfam" id="TIGR00612">
    <property type="entry name" value="ispG_gcpE"/>
    <property type="match status" value="1"/>
</dbReference>
<dbReference type="NCBIfam" id="NF001540">
    <property type="entry name" value="PRK00366.1"/>
    <property type="match status" value="1"/>
</dbReference>
<dbReference type="PANTHER" id="PTHR30454">
    <property type="entry name" value="4-HYDROXY-3-METHYLBUT-2-EN-1-YL DIPHOSPHATE SYNTHASE"/>
    <property type="match status" value="1"/>
</dbReference>
<dbReference type="PANTHER" id="PTHR30454:SF0">
    <property type="entry name" value="4-HYDROXY-3-METHYLBUT-2-EN-1-YL DIPHOSPHATE SYNTHASE (FERREDOXIN), CHLOROPLASTIC"/>
    <property type="match status" value="1"/>
</dbReference>
<dbReference type="Pfam" id="PF04551">
    <property type="entry name" value="GcpE"/>
    <property type="match status" value="1"/>
</dbReference>
<dbReference type="PIRSF" id="PIRSF004640">
    <property type="entry name" value="IspG"/>
    <property type="match status" value="1"/>
</dbReference>
<dbReference type="SUPFAM" id="SSF51717">
    <property type="entry name" value="Dihydropteroate synthetase-like"/>
    <property type="match status" value="1"/>
</dbReference>
<dbReference type="SUPFAM" id="SSF56014">
    <property type="entry name" value="Nitrite and sulphite reductase 4Fe-4S domain-like"/>
    <property type="match status" value="1"/>
</dbReference>
<sequence length="370" mass="39961">MHFESPIKRRRSRQIMVGAVPVGGDAPIAVQSMTNTETCDVDATVAQIETLQQAGADIVRVSVPTMDAAEAFAAIKQRVTLPLVADIHFDYKIALRVAEVGVDCLRINPGNIGREDRVQAVISAAKDKGIPIRIGVNAGSLEKDLQKKYGEPTPEALVESAMRHIDILDRHDFQNFKVSLKASDVFMTVAAYRQIADQIEQPLHLGITEAGGFRSGAVKSAIGLGMLLMDGIGDTIRVSLAADPVEEIRVGYDILKSLKLRSKGINFIACPSCSRQNFDVIKTMNELERRLEDINTPLDVAVIGCVVNGPGEAKEADVGLTGGSPSNLIYVGGKPDHKLNNDELVERFESLIRSKAAAKQEELDALIAKG</sequence>
<comment type="function">
    <text evidence="1">Converts 2C-methyl-D-erythritol 2,4-cyclodiphosphate (ME-2,4cPP) into 1-hydroxy-2-methyl-2-(E)-butenyl 4-diphosphate.</text>
</comment>
<comment type="catalytic activity">
    <reaction evidence="1">
        <text>(2E)-4-hydroxy-3-methylbut-2-enyl diphosphate + oxidized [flavodoxin] + H2O + 2 H(+) = 2-C-methyl-D-erythritol 2,4-cyclic diphosphate + reduced [flavodoxin]</text>
        <dbReference type="Rhea" id="RHEA:43604"/>
        <dbReference type="Rhea" id="RHEA-COMP:10622"/>
        <dbReference type="Rhea" id="RHEA-COMP:10623"/>
        <dbReference type="ChEBI" id="CHEBI:15377"/>
        <dbReference type="ChEBI" id="CHEBI:15378"/>
        <dbReference type="ChEBI" id="CHEBI:57618"/>
        <dbReference type="ChEBI" id="CHEBI:58210"/>
        <dbReference type="ChEBI" id="CHEBI:58483"/>
        <dbReference type="ChEBI" id="CHEBI:128753"/>
        <dbReference type="EC" id="1.17.7.3"/>
    </reaction>
</comment>
<comment type="cofactor">
    <cofactor evidence="1">
        <name>[4Fe-4S] cluster</name>
        <dbReference type="ChEBI" id="CHEBI:49883"/>
    </cofactor>
    <text evidence="1">Binds 1 [4Fe-4S] cluster.</text>
</comment>
<comment type="pathway">
    <text evidence="1">Isoprenoid biosynthesis; isopentenyl diphosphate biosynthesis via DXP pathway; isopentenyl diphosphate from 1-deoxy-D-xylulose 5-phosphate: step 5/6.</text>
</comment>
<comment type="similarity">
    <text evidence="1">Belongs to the IspG family.</text>
</comment>
<accession>Q2SDW4</accession>
<name>ISPG_HAHCH</name>
<organism>
    <name type="scientific">Hahella chejuensis (strain KCTC 2396)</name>
    <dbReference type="NCBI Taxonomy" id="349521"/>
    <lineage>
        <taxon>Bacteria</taxon>
        <taxon>Pseudomonadati</taxon>
        <taxon>Pseudomonadota</taxon>
        <taxon>Gammaproteobacteria</taxon>
        <taxon>Oceanospirillales</taxon>
        <taxon>Hahellaceae</taxon>
        <taxon>Hahella</taxon>
    </lineage>
</organism>
<reference key="1">
    <citation type="journal article" date="2005" name="Nucleic Acids Res.">
        <title>Genomic blueprint of Hahella chejuensis, a marine microbe producing an algicidal agent.</title>
        <authorList>
            <person name="Jeong H."/>
            <person name="Yim J.H."/>
            <person name="Lee C."/>
            <person name="Choi S.-H."/>
            <person name="Park Y.K."/>
            <person name="Yoon S.H."/>
            <person name="Hur C.-G."/>
            <person name="Kang H.-Y."/>
            <person name="Kim D."/>
            <person name="Lee H.H."/>
            <person name="Park K.H."/>
            <person name="Park S.-H."/>
            <person name="Park H.-S."/>
            <person name="Lee H.K."/>
            <person name="Oh T.K."/>
            <person name="Kim J.F."/>
        </authorList>
    </citation>
    <scope>NUCLEOTIDE SEQUENCE [LARGE SCALE GENOMIC DNA]</scope>
    <source>
        <strain>KCTC 2396</strain>
    </source>
</reference>
<keyword id="KW-0004">4Fe-4S</keyword>
<keyword id="KW-0408">Iron</keyword>
<keyword id="KW-0411">Iron-sulfur</keyword>
<keyword id="KW-0414">Isoprene biosynthesis</keyword>
<keyword id="KW-0479">Metal-binding</keyword>
<keyword id="KW-0560">Oxidoreductase</keyword>
<keyword id="KW-1185">Reference proteome</keyword>
<feature type="chain" id="PRO_1000011473" description="4-hydroxy-3-methylbut-2-en-1-yl diphosphate synthase (flavodoxin)">
    <location>
        <begin position="1"/>
        <end position="370"/>
    </location>
</feature>
<feature type="binding site" evidence="1">
    <location>
        <position position="270"/>
    </location>
    <ligand>
        <name>[4Fe-4S] cluster</name>
        <dbReference type="ChEBI" id="CHEBI:49883"/>
    </ligand>
</feature>
<feature type="binding site" evidence="1">
    <location>
        <position position="273"/>
    </location>
    <ligand>
        <name>[4Fe-4S] cluster</name>
        <dbReference type="ChEBI" id="CHEBI:49883"/>
    </ligand>
</feature>
<feature type="binding site" evidence="1">
    <location>
        <position position="305"/>
    </location>
    <ligand>
        <name>[4Fe-4S] cluster</name>
        <dbReference type="ChEBI" id="CHEBI:49883"/>
    </ligand>
</feature>
<feature type="binding site" evidence="1">
    <location>
        <position position="312"/>
    </location>
    <ligand>
        <name>[4Fe-4S] cluster</name>
        <dbReference type="ChEBI" id="CHEBI:49883"/>
    </ligand>
</feature>
<evidence type="ECO:0000255" key="1">
    <source>
        <dbReference type="HAMAP-Rule" id="MF_00159"/>
    </source>
</evidence>
<proteinExistence type="inferred from homology"/>
<gene>
    <name evidence="1" type="primary">ispG</name>
    <name type="ordered locus">HCH_04456</name>
</gene>
<protein>
    <recommendedName>
        <fullName evidence="1">4-hydroxy-3-methylbut-2-en-1-yl diphosphate synthase (flavodoxin)</fullName>
        <ecNumber evidence="1">1.17.7.3</ecNumber>
    </recommendedName>
    <alternativeName>
        <fullName evidence="1">1-hydroxy-2-methyl-2-(E)-butenyl 4-diphosphate synthase</fullName>
    </alternativeName>
</protein>